<reference evidence="2" key="1">
    <citation type="journal article" date="2000" name="Biochem. Biophys. Res. Commun.">
        <title>The SepOvotropin: a new ovarian peptide regulating oocyte transport in Sepia officinalis.</title>
        <authorList>
            <person name="Zatylny C."/>
            <person name="Gagnon J."/>
            <person name="Boucaud-Camou E."/>
            <person name="Henry J."/>
        </authorList>
    </citation>
    <scope>PROTEIN SEQUENCE</scope>
    <scope>FUNCTION</scope>
    <scope>TISSUE SPECIFICITY</scope>
    <scope>MASS SPECTROMETRY</scope>
    <scope>AMIDATION AT TYR-13</scope>
    <source>
        <tissue>Ovarian follicle</tissue>
    </source>
</reference>
<accession>P83567</accession>
<proteinExistence type="evidence at protein level"/>
<name>SOVO_SEPOF</name>
<organism evidence="2">
    <name type="scientific">Sepia officinalis</name>
    <name type="common">Common cuttlefish</name>
    <dbReference type="NCBI Taxonomy" id="6610"/>
    <lineage>
        <taxon>Eukaryota</taxon>
        <taxon>Metazoa</taxon>
        <taxon>Spiralia</taxon>
        <taxon>Lophotrochozoa</taxon>
        <taxon>Mollusca</taxon>
        <taxon>Cephalopoda</taxon>
        <taxon>Coleoidea</taxon>
        <taxon>Decapodiformes</taxon>
        <taxon>Sepiida</taxon>
        <taxon>Sepiina</taxon>
        <taxon>Sepiidae</taxon>
        <taxon>Sepia</taxon>
    </lineage>
</organism>
<sequence>PKDSMLLLQVPVY</sequence>
<feature type="peptide" id="PRO_0000044220" description="SepOvotropin">
    <location>
        <begin position="1"/>
        <end position="13"/>
    </location>
</feature>
<feature type="modified residue" description="Tyrosine amide" evidence="1">
    <location>
        <position position="13"/>
    </location>
</feature>
<keyword id="KW-0027">Amidation</keyword>
<keyword id="KW-0903">Direct protein sequencing</keyword>
<keyword id="KW-0964">Secreted</keyword>
<comment type="function">
    <text evidence="1">Has myotropic activity targeting the genital tract.</text>
</comment>
<comment type="subcellular location">
    <subcellularLocation>
        <location>Secreted</location>
    </subcellularLocation>
</comment>
<comment type="tissue specificity">
    <text evidence="1">Follicle, fully grown oocyte and egg.</text>
</comment>
<comment type="mass spectrometry"/>
<dbReference type="GO" id="GO:0005576">
    <property type="term" value="C:extracellular region"/>
    <property type="evidence" value="ECO:0007669"/>
    <property type="project" value="UniProtKB-SubCell"/>
</dbReference>
<protein>
    <recommendedName>
        <fullName>SepOvotropin</fullName>
    </recommendedName>
</protein>
<evidence type="ECO:0000269" key="1">
    <source>
    </source>
</evidence>
<evidence type="ECO:0000305" key="2"/>